<proteinExistence type="predicted"/>
<evidence type="ECO:0000255" key="1"/>
<evidence type="ECO:0000305" key="2"/>
<name>Y2020_NEIMB</name>
<sequence length="227" mass="24454">MQHDVYDYTAHTVSKNTVLQKTYRLLGFSFIPASAGAALAANAGFNFYAAFGSRWIGFAVVLAFFYGMIHFIEKNRYSNTGVTLLMVFTFGMGVLIGPVLQYALHIADGAKIVGIAAAMTAAVFLTMSALARRTRLDMNALGRFLTVGAVILMVAVVANLFLGIPALALTISAGFVLFSSLMIMWQVRTVIDGGEDSHISAALTLFISLYNIFSSLLNILLSLNGED</sequence>
<protein>
    <recommendedName>
        <fullName>Uncharacterized protein NMB2020</fullName>
    </recommendedName>
</protein>
<gene>
    <name type="ordered locus">NMB2020</name>
</gene>
<feature type="chain" id="PRO_0000179109" description="Uncharacterized protein NMB2020">
    <location>
        <begin position="1"/>
        <end position="227"/>
    </location>
</feature>
<feature type="transmembrane region" description="Helical" evidence="1">
    <location>
        <begin position="25"/>
        <end position="45"/>
    </location>
</feature>
<feature type="transmembrane region" description="Helical" evidence="1">
    <location>
        <begin position="49"/>
        <end position="69"/>
    </location>
</feature>
<feature type="transmembrane region" description="Helical" evidence="1">
    <location>
        <begin position="80"/>
        <end position="100"/>
    </location>
</feature>
<feature type="transmembrane region" description="Helical" evidence="1">
    <location>
        <begin position="111"/>
        <end position="131"/>
    </location>
</feature>
<feature type="transmembrane region" description="Helical" evidence="1">
    <location>
        <begin position="144"/>
        <end position="164"/>
    </location>
</feature>
<feature type="transmembrane region" description="Helical" evidence="1">
    <location>
        <begin position="165"/>
        <end position="185"/>
    </location>
</feature>
<feature type="transmembrane region" description="Helical" evidence="1">
    <location>
        <begin position="201"/>
        <end position="221"/>
    </location>
</feature>
<keyword id="KW-1003">Cell membrane</keyword>
<keyword id="KW-0472">Membrane</keyword>
<keyword id="KW-1185">Reference proteome</keyword>
<keyword id="KW-0812">Transmembrane</keyword>
<keyword id="KW-1133">Transmembrane helix</keyword>
<organism>
    <name type="scientific">Neisseria meningitidis serogroup B (strain ATCC BAA-335 / MC58)</name>
    <dbReference type="NCBI Taxonomy" id="122586"/>
    <lineage>
        <taxon>Bacteria</taxon>
        <taxon>Pseudomonadati</taxon>
        <taxon>Pseudomonadota</taxon>
        <taxon>Betaproteobacteria</taxon>
        <taxon>Neisseriales</taxon>
        <taxon>Neisseriaceae</taxon>
        <taxon>Neisseria</taxon>
    </lineage>
</organism>
<dbReference type="EMBL" id="AE002098">
    <property type="protein sequence ID" value="AAF42343.1"/>
    <property type="molecule type" value="Genomic_DNA"/>
</dbReference>
<dbReference type="PIR" id="G81014">
    <property type="entry name" value="G81014"/>
</dbReference>
<dbReference type="RefSeq" id="NP_275012.1">
    <property type="nucleotide sequence ID" value="NC_003112.2"/>
</dbReference>
<dbReference type="RefSeq" id="WP_002225674.1">
    <property type="nucleotide sequence ID" value="NC_003112.2"/>
</dbReference>
<dbReference type="SMR" id="P63702"/>
<dbReference type="FunCoup" id="P63702">
    <property type="interactions" value="180"/>
</dbReference>
<dbReference type="STRING" id="122586.NMB2020"/>
<dbReference type="PaxDb" id="122586-NMB2020"/>
<dbReference type="KEGG" id="nme:NMB2020"/>
<dbReference type="PATRIC" id="fig|122586.8.peg.2577"/>
<dbReference type="HOGENOM" id="CLU_058671_2_1_4"/>
<dbReference type="InParanoid" id="P63702"/>
<dbReference type="OrthoDB" id="9813298at2"/>
<dbReference type="Proteomes" id="UP000000425">
    <property type="component" value="Chromosome"/>
</dbReference>
<dbReference type="GO" id="GO:0005886">
    <property type="term" value="C:plasma membrane"/>
    <property type="evidence" value="ECO:0000318"/>
    <property type="project" value="GO_Central"/>
</dbReference>
<dbReference type="GO" id="GO:0005262">
    <property type="term" value="F:calcium channel activity"/>
    <property type="evidence" value="ECO:0000318"/>
    <property type="project" value="GO_Central"/>
</dbReference>
<dbReference type="GO" id="GO:0030162">
    <property type="term" value="P:regulation of proteolysis"/>
    <property type="evidence" value="ECO:0000318"/>
    <property type="project" value="GO_Central"/>
</dbReference>
<dbReference type="InterPro" id="IPR006214">
    <property type="entry name" value="Bax_inhibitor_1-related"/>
</dbReference>
<dbReference type="PANTHER" id="PTHR23291">
    <property type="entry name" value="BAX INHIBITOR-RELATED"/>
    <property type="match status" value="1"/>
</dbReference>
<dbReference type="PANTHER" id="PTHR23291:SF115">
    <property type="entry name" value="MODULATOR OF FTSH PROTEASE YCCA"/>
    <property type="match status" value="1"/>
</dbReference>
<dbReference type="Pfam" id="PF01027">
    <property type="entry name" value="Bax1-I"/>
    <property type="match status" value="1"/>
</dbReference>
<reference key="1">
    <citation type="journal article" date="2000" name="Science">
        <title>Complete genome sequence of Neisseria meningitidis serogroup B strain MC58.</title>
        <authorList>
            <person name="Tettelin H."/>
            <person name="Saunders N.J."/>
            <person name="Heidelberg J.F."/>
            <person name="Jeffries A.C."/>
            <person name="Nelson K.E."/>
            <person name="Eisen J.A."/>
            <person name="Ketchum K.A."/>
            <person name="Hood D.W."/>
            <person name="Peden J.F."/>
            <person name="Dodson R.J."/>
            <person name="Nelson W.C."/>
            <person name="Gwinn M.L."/>
            <person name="DeBoy R.T."/>
            <person name="Peterson J.D."/>
            <person name="Hickey E.K."/>
            <person name="Haft D.H."/>
            <person name="Salzberg S.L."/>
            <person name="White O."/>
            <person name="Fleischmann R.D."/>
            <person name="Dougherty B.A."/>
            <person name="Mason T.M."/>
            <person name="Ciecko A."/>
            <person name="Parksey D.S."/>
            <person name="Blair E."/>
            <person name="Cittone H."/>
            <person name="Clark E.B."/>
            <person name="Cotton M.D."/>
            <person name="Utterback T.R."/>
            <person name="Khouri H.M."/>
            <person name="Qin H."/>
            <person name="Vamathevan J.J."/>
            <person name="Gill J."/>
            <person name="Scarlato V."/>
            <person name="Masignani V."/>
            <person name="Pizza M."/>
            <person name="Grandi G."/>
            <person name="Sun L."/>
            <person name="Smith H.O."/>
            <person name="Fraser C.M."/>
            <person name="Moxon E.R."/>
            <person name="Rappuoli R."/>
            <person name="Venter J.C."/>
        </authorList>
    </citation>
    <scope>NUCLEOTIDE SEQUENCE [LARGE SCALE GENOMIC DNA]</scope>
    <source>
        <strain>ATCC BAA-335 / MC58</strain>
    </source>
</reference>
<comment type="subcellular location">
    <subcellularLocation>
        <location evidence="2">Cell membrane</location>
        <topology evidence="2">Multi-pass membrane protein</topology>
    </subcellularLocation>
</comment>
<accession>P63702</accession>
<accession>Q9JRI0</accession>